<comment type="catalytic activity">
    <reaction evidence="1">
        <text>2-(N(omega)-L-arginino)succinate = fumarate + L-arginine</text>
        <dbReference type="Rhea" id="RHEA:24020"/>
        <dbReference type="ChEBI" id="CHEBI:29806"/>
        <dbReference type="ChEBI" id="CHEBI:32682"/>
        <dbReference type="ChEBI" id="CHEBI:57472"/>
        <dbReference type="EC" id="4.3.2.1"/>
    </reaction>
</comment>
<comment type="pathway">
    <text evidence="1">Amino-acid biosynthesis; L-arginine biosynthesis; L-arginine from L-ornithine and carbamoyl phosphate: step 3/3.</text>
</comment>
<comment type="subcellular location">
    <subcellularLocation>
        <location evidence="1">Cytoplasm</location>
    </subcellularLocation>
</comment>
<comment type="similarity">
    <text evidence="1">Belongs to the lyase 1 family. Argininosuccinate lyase subfamily.</text>
</comment>
<gene>
    <name evidence="1" type="primary">argH</name>
    <name type="ordered locus">ASA_0582</name>
</gene>
<protein>
    <recommendedName>
        <fullName evidence="1">Argininosuccinate lyase</fullName>
        <shortName evidence="1">ASAL</shortName>
        <ecNumber evidence="1">4.3.2.1</ecNumber>
    </recommendedName>
    <alternativeName>
        <fullName evidence="1">Arginosuccinase</fullName>
    </alternativeName>
</protein>
<accession>A4SIM6</accession>
<evidence type="ECO:0000255" key="1">
    <source>
        <dbReference type="HAMAP-Rule" id="MF_00006"/>
    </source>
</evidence>
<proteinExistence type="inferred from homology"/>
<reference key="1">
    <citation type="journal article" date="2008" name="BMC Genomics">
        <title>The genome of Aeromonas salmonicida subsp. salmonicida A449: insights into the evolution of a fish pathogen.</title>
        <authorList>
            <person name="Reith M.E."/>
            <person name="Singh R.K."/>
            <person name="Curtis B."/>
            <person name="Boyd J.M."/>
            <person name="Bouevitch A."/>
            <person name="Kimball J."/>
            <person name="Munholland J."/>
            <person name="Murphy C."/>
            <person name="Sarty D."/>
            <person name="Williams J."/>
            <person name="Nash J.H."/>
            <person name="Johnson S.C."/>
            <person name="Brown L.L."/>
        </authorList>
    </citation>
    <scope>NUCLEOTIDE SEQUENCE [LARGE SCALE GENOMIC DNA]</scope>
    <source>
        <strain>A449</strain>
    </source>
</reference>
<organism>
    <name type="scientific">Aeromonas salmonicida (strain A449)</name>
    <dbReference type="NCBI Taxonomy" id="382245"/>
    <lineage>
        <taxon>Bacteria</taxon>
        <taxon>Pseudomonadati</taxon>
        <taxon>Pseudomonadota</taxon>
        <taxon>Gammaproteobacteria</taxon>
        <taxon>Aeromonadales</taxon>
        <taxon>Aeromonadaceae</taxon>
        <taxon>Aeromonas</taxon>
    </lineage>
</organism>
<sequence>MALWGGRFSQGADSRFKQFNDSLRFDYRLAEQDIQGSMAWAKALVKVGVLTADEQGKLQQAMEVLLASVQQDPHQILNSDAEDIHSWVESQLIAAVGDLGKKLHTGRSRNDQVATDLKLWCKAQGELLLGSISALQAGLVASARANQAAVLPGYTHLQRAQPVTFAHWALAYVEMLERDYSRLQDALKRLDTSPLGCGALAGTAYAIDREALALDMGFGGATRNSLDSVSDRDHVVELMHVASLSMTHLSRFAEDLIFYNTGEAGFVELSDAVTSGSSLMPQKKNPDALELIRGKTGRVVGAQMGMLMSLKALPLAYNKDMQEDKEGLFDALDTWHDCLDMAALVLIDLKVNVERTKAAAQGGYANATELADYLVAKGIPFREAHHIVGETVVYALEVKKPLEDLSLPEFQRFSPVIGEDVYPNLELEATLAKRVAKGGVARELVDAALTAAEQWLAKWAG</sequence>
<name>ARLY_AERS4</name>
<dbReference type="EC" id="4.3.2.1" evidence="1"/>
<dbReference type="EMBL" id="CP000644">
    <property type="protein sequence ID" value="ABO88748.1"/>
    <property type="molecule type" value="Genomic_DNA"/>
</dbReference>
<dbReference type="RefSeq" id="WP_005313756.1">
    <property type="nucleotide sequence ID" value="NC_009348.1"/>
</dbReference>
<dbReference type="SMR" id="A4SIM6"/>
<dbReference type="STRING" id="29491.GCA_000820065_01917"/>
<dbReference type="KEGG" id="asa:ASA_0582"/>
<dbReference type="PATRIC" id="fig|382245.13.peg.587"/>
<dbReference type="eggNOG" id="COG0165">
    <property type="taxonomic scope" value="Bacteria"/>
</dbReference>
<dbReference type="HOGENOM" id="CLU_027272_2_3_6"/>
<dbReference type="UniPathway" id="UPA00068">
    <property type="reaction ID" value="UER00114"/>
</dbReference>
<dbReference type="Proteomes" id="UP000000225">
    <property type="component" value="Chromosome"/>
</dbReference>
<dbReference type="GO" id="GO:0005829">
    <property type="term" value="C:cytosol"/>
    <property type="evidence" value="ECO:0007669"/>
    <property type="project" value="TreeGrafter"/>
</dbReference>
<dbReference type="GO" id="GO:0004056">
    <property type="term" value="F:argininosuccinate lyase activity"/>
    <property type="evidence" value="ECO:0007669"/>
    <property type="project" value="UniProtKB-UniRule"/>
</dbReference>
<dbReference type="GO" id="GO:0042450">
    <property type="term" value="P:arginine biosynthetic process via ornithine"/>
    <property type="evidence" value="ECO:0007669"/>
    <property type="project" value="InterPro"/>
</dbReference>
<dbReference type="GO" id="GO:0006526">
    <property type="term" value="P:L-arginine biosynthetic process"/>
    <property type="evidence" value="ECO:0007669"/>
    <property type="project" value="UniProtKB-UniRule"/>
</dbReference>
<dbReference type="CDD" id="cd01359">
    <property type="entry name" value="Argininosuccinate_lyase"/>
    <property type="match status" value="1"/>
</dbReference>
<dbReference type="FunFam" id="1.10.40.30:FF:000001">
    <property type="entry name" value="Argininosuccinate lyase"/>
    <property type="match status" value="1"/>
</dbReference>
<dbReference type="FunFam" id="1.20.200.10:FF:000006">
    <property type="entry name" value="Argininosuccinate lyase"/>
    <property type="match status" value="1"/>
</dbReference>
<dbReference type="Gene3D" id="1.10.40.30">
    <property type="entry name" value="Fumarase/aspartase (C-terminal domain)"/>
    <property type="match status" value="1"/>
</dbReference>
<dbReference type="Gene3D" id="1.20.200.10">
    <property type="entry name" value="Fumarase/aspartase (Central domain)"/>
    <property type="match status" value="1"/>
</dbReference>
<dbReference type="Gene3D" id="1.10.275.10">
    <property type="entry name" value="Fumarase/aspartase (N-terminal domain)"/>
    <property type="match status" value="1"/>
</dbReference>
<dbReference type="HAMAP" id="MF_00006">
    <property type="entry name" value="Arg_succ_lyase"/>
    <property type="match status" value="1"/>
</dbReference>
<dbReference type="InterPro" id="IPR029419">
    <property type="entry name" value="Arg_succ_lyase_C"/>
</dbReference>
<dbReference type="InterPro" id="IPR009049">
    <property type="entry name" value="Argininosuccinate_lyase"/>
</dbReference>
<dbReference type="InterPro" id="IPR024083">
    <property type="entry name" value="Fumarase/histidase_N"/>
</dbReference>
<dbReference type="InterPro" id="IPR020557">
    <property type="entry name" value="Fumarate_lyase_CS"/>
</dbReference>
<dbReference type="InterPro" id="IPR000362">
    <property type="entry name" value="Fumarate_lyase_fam"/>
</dbReference>
<dbReference type="InterPro" id="IPR022761">
    <property type="entry name" value="Fumarate_lyase_N"/>
</dbReference>
<dbReference type="InterPro" id="IPR008948">
    <property type="entry name" value="L-Aspartase-like"/>
</dbReference>
<dbReference type="NCBIfam" id="TIGR00838">
    <property type="entry name" value="argH"/>
    <property type="match status" value="1"/>
</dbReference>
<dbReference type="NCBIfam" id="NF008964">
    <property type="entry name" value="PRK12308.1"/>
    <property type="match status" value="1"/>
</dbReference>
<dbReference type="PANTHER" id="PTHR43814">
    <property type="entry name" value="ARGININOSUCCINATE LYASE"/>
    <property type="match status" value="1"/>
</dbReference>
<dbReference type="PANTHER" id="PTHR43814:SF1">
    <property type="entry name" value="ARGININOSUCCINATE LYASE"/>
    <property type="match status" value="1"/>
</dbReference>
<dbReference type="Pfam" id="PF14698">
    <property type="entry name" value="ASL_C2"/>
    <property type="match status" value="1"/>
</dbReference>
<dbReference type="Pfam" id="PF00206">
    <property type="entry name" value="Lyase_1"/>
    <property type="match status" value="1"/>
</dbReference>
<dbReference type="PRINTS" id="PR00145">
    <property type="entry name" value="ARGSUCLYASE"/>
</dbReference>
<dbReference type="PRINTS" id="PR00149">
    <property type="entry name" value="FUMRATELYASE"/>
</dbReference>
<dbReference type="SUPFAM" id="SSF48557">
    <property type="entry name" value="L-aspartase-like"/>
    <property type="match status" value="1"/>
</dbReference>
<dbReference type="PROSITE" id="PS00163">
    <property type="entry name" value="FUMARATE_LYASES"/>
    <property type="match status" value="1"/>
</dbReference>
<feature type="chain" id="PRO_1000000449" description="Argininosuccinate lyase">
    <location>
        <begin position="1"/>
        <end position="461"/>
    </location>
</feature>
<keyword id="KW-0028">Amino-acid biosynthesis</keyword>
<keyword id="KW-0055">Arginine biosynthesis</keyword>
<keyword id="KW-0963">Cytoplasm</keyword>
<keyword id="KW-0456">Lyase</keyword>